<dbReference type="EMBL" id="U45285">
    <property type="protein sequence ID" value="AAA97878.1"/>
    <property type="molecule type" value="mRNA"/>
</dbReference>
<dbReference type="EMBL" id="AF025374">
    <property type="protein sequence ID" value="AAC35742.1"/>
    <property type="molecule type" value="mRNA"/>
</dbReference>
<dbReference type="EMBL" id="AF033033">
    <property type="protein sequence ID" value="AAD31081.2"/>
    <property type="molecule type" value="Genomic_DNA"/>
</dbReference>
<dbReference type="EMBL" id="CH471076">
    <property type="protein sequence ID" value="EAW74691.1"/>
    <property type="molecule type" value="Genomic_DNA"/>
</dbReference>
<dbReference type="EMBL" id="BC018133">
    <property type="protein sequence ID" value="AAH18133.1"/>
    <property type="molecule type" value="mRNA"/>
</dbReference>
<dbReference type="EMBL" id="BC032465">
    <property type="protein sequence ID" value="AAH32465.1"/>
    <property type="molecule type" value="mRNA"/>
</dbReference>
<dbReference type="CCDS" id="CCDS53670.1">
    <molecule id="Q13488-2"/>
</dbReference>
<dbReference type="CCDS" id="CCDS8177.1">
    <molecule id="Q13488-1"/>
</dbReference>
<dbReference type="RefSeq" id="NP_006010.2">
    <molecule id="Q13488-1"/>
    <property type="nucleotide sequence ID" value="NM_006019.3"/>
</dbReference>
<dbReference type="RefSeq" id="NP_006044.1">
    <molecule id="Q13488-2"/>
    <property type="nucleotide sequence ID" value="NM_006053.4"/>
</dbReference>
<dbReference type="RefSeq" id="XP_005273766.1">
    <property type="nucleotide sequence ID" value="XM_005273709.3"/>
</dbReference>
<dbReference type="RefSeq" id="XP_011543028.1">
    <property type="nucleotide sequence ID" value="XM_011544726.2"/>
</dbReference>
<dbReference type="RefSeq" id="XP_047282194.1">
    <molecule id="Q13488-1"/>
    <property type="nucleotide sequence ID" value="XM_047426238.1"/>
</dbReference>
<dbReference type="RefSeq" id="XP_047282195.1">
    <molecule id="Q13488-1"/>
    <property type="nucleotide sequence ID" value="XM_047426239.1"/>
</dbReference>
<dbReference type="RefSeq" id="XP_054223418.1">
    <molecule id="Q13488-1"/>
    <property type="nucleotide sequence ID" value="XM_054367443.1"/>
</dbReference>
<dbReference type="RefSeq" id="XP_054223419.1">
    <molecule id="Q13488-1"/>
    <property type="nucleotide sequence ID" value="XM_054367444.1"/>
</dbReference>
<dbReference type="SMR" id="Q13488"/>
<dbReference type="BioGRID" id="115597">
    <property type="interactions" value="82"/>
</dbReference>
<dbReference type="ComplexPortal" id="CPX-6905">
    <property type="entry name" value="Vacuolar proton translocating ATPase complex, ATP6V0A3 variant"/>
</dbReference>
<dbReference type="FunCoup" id="Q13488">
    <property type="interactions" value="634"/>
</dbReference>
<dbReference type="IntAct" id="Q13488">
    <property type="interactions" value="55"/>
</dbReference>
<dbReference type="MINT" id="Q13488"/>
<dbReference type="STRING" id="9606.ENSP00000265686"/>
<dbReference type="DrugBank" id="DB01133">
    <property type="generic name" value="Tiludronic acid"/>
</dbReference>
<dbReference type="DrugCentral" id="Q13488"/>
<dbReference type="GlyGen" id="Q13488">
    <property type="glycosylation" value="1 site, 1 O-linked glycan (1 site)"/>
</dbReference>
<dbReference type="iPTMnet" id="Q13488"/>
<dbReference type="PhosphoSitePlus" id="Q13488"/>
<dbReference type="SwissPalm" id="Q13488"/>
<dbReference type="BioMuta" id="TCIRG1"/>
<dbReference type="DMDM" id="223634720"/>
<dbReference type="jPOST" id="Q13488"/>
<dbReference type="MassIVE" id="Q13488"/>
<dbReference type="PaxDb" id="9606-ENSP00000265686"/>
<dbReference type="PeptideAtlas" id="Q13488"/>
<dbReference type="ProteomicsDB" id="59481">
    <molecule id="Q13488-1"/>
</dbReference>
<dbReference type="ProteomicsDB" id="59482">
    <molecule id="Q13488-2"/>
</dbReference>
<dbReference type="Pumba" id="Q13488"/>
<dbReference type="Antibodypedia" id="30523">
    <property type="antibodies" value="109 antibodies from 28 providers"/>
</dbReference>
<dbReference type="DNASU" id="10312"/>
<dbReference type="Ensembl" id="ENST00000265686.8">
    <molecule id="Q13488-1"/>
    <property type="protein sequence ID" value="ENSP00000265686.3"/>
    <property type="gene ID" value="ENSG00000110719.11"/>
</dbReference>
<dbReference type="Ensembl" id="ENST00000532635.5">
    <molecule id="Q13488-2"/>
    <property type="protein sequence ID" value="ENSP00000434407.1"/>
    <property type="gene ID" value="ENSG00000110719.11"/>
</dbReference>
<dbReference type="GeneID" id="10312"/>
<dbReference type="KEGG" id="hsa:10312"/>
<dbReference type="MANE-Select" id="ENST00000265686.8">
    <property type="protein sequence ID" value="ENSP00000265686.3"/>
    <property type="RefSeq nucleotide sequence ID" value="NM_006019.4"/>
    <property type="RefSeq protein sequence ID" value="NP_006010.2"/>
</dbReference>
<dbReference type="UCSC" id="uc001one.4">
    <molecule id="Q13488-1"/>
    <property type="organism name" value="human"/>
</dbReference>
<dbReference type="AGR" id="HGNC:11647"/>
<dbReference type="CTD" id="10312"/>
<dbReference type="DisGeNET" id="10312"/>
<dbReference type="GeneCards" id="TCIRG1"/>
<dbReference type="HGNC" id="HGNC:11647">
    <property type="gene designation" value="TCIRG1"/>
</dbReference>
<dbReference type="HPA" id="ENSG00000110719">
    <property type="expression patterns" value="Tissue enhanced (pancreas)"/>
</dbReference>
<dbReference type="MalaCards" id="TCIRG1"/>
<dbReference type="MIM" id="259700">
    <property type="type" value="phenotype"/>
</dbReference>
<dbReference type="MIM" id="604592">
    <property type="type" value="gene"/>
</dbReference>
<dbReference type="neXtProt" id="NX_Q13488"/>
<dbReference type="OpenTargets" id="ENSG00000110719"/>
<dbReference type="Orphanet" id="486">
    <property type="disease" value="Autosomal dominant severe congenital neutropenia"/>
</dbReference>
<dbReference type="Orphanet" id="667">
    <property type="disease" value="Autosomal recessive malignant osteopetrosis"/>
</dbReference>
<dbReference type="Orphanet" id="1782">
    <property type="disease" value="Dysosteosclerosis"/>
</dbReference>
<dbReference type="Orphanet" id="210110">
    <property type="disease" value="Intermediate osteopetrosis"/>
</dbReference>
<dbReference type="PharmGKB" id="PA36399"/>
<dbReference type="VEuPathDB" id="HostDB:ENSG00000110719"/>
<dbReference type="eggNOG" id="KOG2189">
    <property type="taxonomic scope" value="Eukaryota"/>
</dbReference>
<dbReference type="GeneTree" id="ENSGT00950000182881"/>
<dbReference type="HOGENOM" id="CLU_005230_0_0_1"/>
<dbReference type="InParanoid" id="Q13488"/>
<dbReference type="OMA" id="QFQMITE"/>
<dbReference type="OrthoDB" id="10264220at2759"/>
<dbReference type="PAN-GO" id="Q13488">
    <property type="GO annotations" value="4 GO annotations based on evolutionary models"/>
</dbReference>
<dbReference type="PhylomeDB" id="Q13488"/>
<dbReference type="TreeFam" id="TF300346"/>
<dbReference type="BioCyc" id="MetaCyc:ENSG00000110719-MONOMER"/>
<dbReference type="PathwayCommons" id="Q13488"/>
<dbReference type="Reactome" id="R-HSA-1222556">
    <property type="pathway name" value="ROS and RNS production in phagocytes"/>
</dbReference>
<dbReference type="Reactome" id="R-HSA-6798695">
    <property type="pathway name" value="Neutrophil degranulation"/>
</dbReference>
<dbReference type="Reactome" id="R-HSA-77387">
    <property type="pathway name" value="Insulin receptor recycling"/>
</dbReference>
<dbReference type="Reactome" id="R-HSA-917977">
    <property type="pathway name" value="Transferrin endocytosis and recycling"/>
</dbReference>
<dbReference type="Reactome" id="R-HSA-9639288">
    <property type="pathway name" value="Amino acids regulate mTORC1"/>
</dbReference>
<dbReference type="Reactome" id="R-HSA-983712">
    <property type="pathway name" value="Ion channel transport"/>
</dbReference>
<dbReference type="SignaLink" id="Q13488"/>
<dbReference type="SIGNOR" id="Q13488"/>
<dbReference type="BioGRID-ORCS" id="10312">
    <property type="hits" value="16 hits in 1154 CRISPR screens"/>
</dbReference>
<dbReference type="ChiTaRS" id="TCIRG1">
    <property type="organism name" value="human"/>
</dbReference>
<dbReference type="GeneWiki" id="TCIRG1"/>
<dbReference type="GenomeRNAi" id="10312"/>
<dbReference type="Pharos" id="Q13488">
    <property type="development level" value="Tbio"/>
</dbReference>
<dbReference type="PRO" id="PR:Q13488"/>
<dbReference type="Proteomes" id="UP000005640">
    <property type="component" value="Chromosome 11"/>
</dbReference>
<dbReference type="RNAct" id="Q13488">
    <property type="molecule type" value="protein"/>
</dbReference>
<dbReference type="Bgee" id="ENSG00000110719">
    <property type="expression patterns" value="Expressed in granulocyte and 99 other cell types or tissues"/>
</dbReference>
<dbReference type="ExpressionAtlas" id="Q13488">
    <property type="expression patterns" value="baseline and differential"/>
</dbReference>
<dbReference type="GO" id="GO:0016324">
    <property type="term" value="C:apical plasma membrane"/>
    <property type="evidence" value="ECO:0000314"/>
    <property type="project" value="UniProtKB"/>
</dbReference>
<dbReference type="GO" id="GO:0010008">
    <property type="term" value="C:endosome membrane"/>
    <property type="evidence" value="ECO:0000304"/>
    <property type="project" value="Reactome"/>
</dbReference>
<dbReference type="GO" id="GO:0101003">
    <property type="term" value="C:ficolin-1-rich granule membrane"/>
    <property type="evidence" value="ECO:0000304"/>
    <property type="project" value="Reactome"/>
</dbReference>
<dbReference type="GO" id="GO:0005770">
    <property type="term" value="C:late endosome"/>
    <property type="evidence" value="ECO:0007669"/>
    <property type="project" value="Ensembl"/>
</dbReference>
<dbReference type="GO" id="GO:0005765">
    <property type="term" value="C:lysosomal membrane"/>
    <property type="evidence" value="ECO:0007005"/>
    <property type="project" value="UniProtKB"/>
</dbReference>
<dbReference type="GO" id="GO:0005634">
    <property type="term" value="C:nucleus"/>
    <property type="evidence" value="ECO:0007669"/>
    <property type="project" value="Ensembl"/>
</dbReference>
<dbReference type="GO" id="GO:0030670">
    <property type="term" value="C:phagocytic vesicle membrane"/>
    <property type="evidence" value="ECO:0000304"/>
    <property type="project" value="Reactome"/>
</dbReference>
<dbReference type="GO" id="GO:0005886">
    <property type="term" value="C:plasma membrane"/>
    <property type="evidence" value="ECO:0000318"/>
    <property type="project" value="GO_Central"/>
</dbReference>
<dbReference type="GO" id="GO:0033176">
    <property type="term" value="C:proton-transporting V-type ATPase complex"/>
    <property type="evidence" value="ECO:0000303"/>
    <property type="project" value="ComplexPortal"/>
</dbReference>
<dbReference type="GO" id="GO:0016471">
    <property type="term" value="C:vacuolar proton-transporting V-type ATPase complex"/>
    <property type="evidence" value="ECO:0000318"/>
    <property type="project" value="GO_Central"/>
</dbReference>
<dbReference type="GO" id="GO:0000220">
    <property type="term" value="C:vacuolar proton-transporting V-type ATPase, V0 domain"/>
    <property type="evidence" value="ECO:0007669"/>
    <property type="project" value="InterPro"/>
</dbReference>
<dbReference type="GO" id="GO:0051117">
    <property type="term" value="F:ATPase binding"/>
    <property type="evidence" value="ECO:0000318"/>
    <property type="project" value="GO_Central"/>
</dbReference>
<dbReference type="GO" id="GO:0046961">
    <property type="term" value="F:proton-transporting ATPase activity, rotational mechanism"/>
    <property type="evidence" value="ECO:0000304"/>
    <property type="project" value="ProtInc"/>
</dbReference>
<dbReference type="GO" id="GO:0006915">
    <property type="term" value="P:apoptotic process"/>
    <property type="evidence" value="ECO:0007669"/>
    <property type="project" value="Ensembl"/>
</dbReference>
<dbReference type="GO" id="GO:0000045">
    <property type="term" value="P:autophagosome assembly"/>
    <property type="evidence" value="ECO:0007669"/>
    <property type="project" value="Ensembl"/>
</dbReference>
<dbReference type="GO" id="GO:0030183">
    <property type="term" value="P:B cell differentiation"/>
    <property type="evidence" value="ECO:0007669"/>
    <property type="project" value="Ensembl"/>
</dbReference>
<dbReference type="GO" id="GO:0045453">
    <property type="term" value="P:bone resorption"/>
    <property type="evidence" value="ECO:0007669"/>
    <property type="project" value="Ensembl"/>
</dbReference>
<dbReference type="GO" id="GO:0006968">
    <property type="term" value="P:cellular defense response"/>
    <property type="evidence" value="ECO:0000304"/>
    <property type="project" value="ProtInc"/>
</dbReference>
<dbReference type="GO" id="GO:0071345">
    <property type="term" value="P:cellular response to cytokine stimulus"/>
    <property type="evidence" value="ECO:0007669"/>
    <property type="project" value="Ensembl"/>
</dbReference>
<dbReference type="GO" id="GO:0097188">
    <property type="term" value="P:dentin mineralization"/>
    <property type="evidence" value="ECO:0007669"/>
    <property type="project" value="Ensembl"/>
</dbReference>
<dbReference type="GO" id="GO:0070166">
    <property type="term" value="P:enamel mineralization"/>
    <property type="evidence" value="ECO:0007669"/>
    <property type="project" value="Ensembl"/>
</dbReference>
<dbReference type="GO" id="GO:0030010">
    <property type="term" value="P:establishment of cell polarity"/>
    <property type="evidence" value="ECO:0007669"/>
    <property type="project" value="Ensembl"/>
</dbReference>
<dbReference type="GO" id="GO:0051650">
    <property type="term" value="P:establishment of vesicle localization"/>
    <property type="evidence" value="ECO:0007669"/>
    <property type="project" value="Ensembl"/>
</dbReference>
<dbReference type="GO" id="GO:0010467">
    <property type="term" value="P:gene expression"/>
    <property type="evidence" value="ECO:0007669"/>
    <property type="project" value="Ensembl"/>
</dbReference>
<dbReference type="GO" id="GO:0061484">
    <property type="term" value="P:hematopoietic stem cell homeostasis"/>
    <property type="evidence" value="ECO:0007669"/>
    <property type="project" value="Ensembl"/>
</dbReference>
<dbReference type="GO" id="GO:0016064">
    <property type="term" value="P:immunoglobulin mediated immune response"/>
    <property type="evidence" value="ECO:0007669"/>
    <property type="project" value="Ensembl"/>
</dbReference>
<dbReference type="GO" id="GO:0006954">
    <property type="term" value="P:inflammatory response"/>
    <property type="evidence" value="ECO:0007669"/>
    <property type="project" value="Ensembl"/>
</dbReference>
<dbReference type="GO" id="GO:0006874">
    <property type="term" value="P:intracellular calcium ion homeostasis"/>
    <property type="evidence" value="ECO:0007669"/>
    <property type="project" value="Ensembl"/>
</dbReference>
<dbReference type="GO" id="GO:0007042">
    <property type="term" value="P:lysosomal lumen acidification"/>
    <property type="evidence" value="ECO:0000303"/>
    <property type="project" value="ComplexPortal"/>
</dbReference>
<dbReference type="GO" id="GO:0016236">
    <property type="term" value="P:macroautophagy"/>
    <property type="evidence" value="ECO:0000250"/>
    <property type="project" value="ParkinsonsUK-UCL"/>
</dbReference>
<dbReference type="GO" id="GO:0035709">
    <property type="term" value="P:memory T cell activation"/>
    <property type="evidence" value="ECO:0007669"/>
    <property type="project" value="Ensembl"/>
</dbReference>
<dbReference type="GO" id="GO:0021554">
    <property type="term" value="P:optic nerve development"/>
    <property type="evidence" value="ECO:0007669"/>
    <property type="project" value="Ensembl"/>
</dbReference>
<dbReference type="GO" id="GO:0001503">
    <property type="term" value="P:ossification"/>
    <property type="evidence" value="ECO:0007669"/>
    <property type="project" value="Ensembl"/>
</dbReference>
<dbReference type="GO" id="GO:0030316">
    <property type="term" value="P:osteoclast differentiation"/>
    <property type="evidence" value="ECO:0007669"/>
    <property type="project" value="Ensembl"/>
</dbReference>
<dbReference type="GO" id="GO:0002158">
    <property type="term" value="P:osteoclast proliferation"/>
    <property type="evidence" value="ECO:0007669"/>
    <property type="project" value="Ensembl"/>
</dbReference>
<dbReference type="GO" id="GO:0045851">
    <property type="term" value="P:pH reduction"/>
    <property type="evidence" value="ECO:0007669"/>
    <property type="project" value="Ensembl"/>
</dbReference>
<dbReference type="GO" id="GO:0090383">
    <property type="term" value="P:phagosome acidification"/>
    <property type="evidence" value="ECO:0007669"/>
    <property type="project" value="Ensembl"/>
</dbReference>
<dbReference type="GO" id="GO:0008284">
    <property type="term" value="P:positive regulation of cell population proliferation"/>
    <property type="evidence" value="ECO:0000304"/>
    <property type="project" value="ProtInc"/>
</dbReference>
<dbReference type="GO" id="GO:0007039">
    <property type="term" value="P:protein catabolic process in the vacuole"/>
    <property type="evidence" value="ECO:0000250"/>
    <property type="project" value="ParkinsonsUK-UCL"/>
</dbReference>
<dbReference type="GO" id="GO:0033365">
    <property type="term" value="P:protein localization to organelle"/>
    <property type="evidence" value="ECO:0007669"/>
    <property type="project" value="Ensembl"/>
</dbReference>
<dbReference type="GO" id="GO:1902600">
    <property type="term" value="P:proton transmembrane transport"/>
    <property type="evidence" value="ECO:0000304"/>
    <property type="project" value="ProtInc"/>
</dbReference>
<dbReference type="GO" id="GO:0010468">
    <property type="term" value="P:regulation of gene expression"/>
    <property type="evidence" value="ECO:0007669"/>
    <property type="project" value="Ensembl"/>
</dbReference>
<dbReference type="GO" id="GO:0050796">
    <property type="term" value="P:regulation of insulin secretion"/>
    <property type="evidence" value="ECO:0007669"/>
    <property type="project" value="Ensembl"/>
</dbReference>
<dbReference type="GO" id="GO:0045667">
    <property type="term" value="P:regulation of osteoblast differentiation"/>
    <property type="evidence" value="ECO:0007669"/>
    <property type="project" value="Ensembl"/>
</dbReference>
<dbReference type="GO" id="GO:0010155">
    <property type="term" value="P:regulation of proton transport"/>
    <property type="evidence" value="ECO:0007669"/>
    <property type="project" value="Ensembl"/>
</dbReference>
<dbReference type="GO" id="GO:0010272">
    <property type="term" value="P:response to silver ion"/>
    <property type="evidence" value="ECO:0007669"/>
    <property type="project" value="Ensembl"/>
</dbReference>
<dbReference type="GO" id="GO:0060041">
    <property type="term" value="P:retina development in camera-type eye"/>
    <property type="evidence" value="ECO:0007669"/>
    <property type="project" value="Ensembl"/>
</dbReference>
<dbReference type="GO" id="GO:0031529">
    <property type="term" value="P:ruffle organization"/>
    <property type="evidence" value="ECO:0007669"/>
    <property type="project" value="Ensembl"/>
</dbReference>
<dbReference type="GO" id="GO:0030217">
    <property type="term" value="P:T cell differentiation"/>
    <property type="evidence" value="ECO:0007669"/>
    <property type="project" value="Ensembl"/>
</dbReference>
<dbReference type="GO" id="GO:0043029">
    <property type="term" value="P:T cell homeostasis"/>
    <property type="evidence" value="ECO:0007669"/>
    <property type="project" value="Ensembl"/>
</dbReference>
<dbReference type="GO" id="GO:0035711">
    <property type="term" value="P:T-helper 1 cell activation"/>
    <property type="evidence" value="ECO:0007669"/>
    <property type="project" value="Ensembl"/>
</dbReference>
<dbReference type="GO" id="GO:0044691">
    <property type="term" value="P:tooth eruption"/>
    <property type="evidence" value="ECO:0007669"/>
    <property type="project" value="Ensembl"/>
</dbReference>
<dbReference type="GO" id="GO:0007035">
    <property type="term" value="P:vacuolar acidification"/>
    <property type="evidence" value="ECO:0000318"/>
    <property type="project" value="GO_Central"/>
</dbReference>
<dbReference type="InterPro" id="IPR002490">
    <property type="entry name" value="V-ATPase_116kDa_su"/>
</dbReference>
<dbReference type="InterPro" id="IPR026028">
    <property type="entry name" value="V-type_ATPase_116kDa_su_euka"/>
</dbReference>
<dbReference type="PANTHER" id="PTHR11629:SF21">
    <property type="entry name" value="V-TYPE PROTON ATPASE 116 KDA SUBUNIT A 3"/>
    <property type="match status" value="1"/>
</dbReference>
<dbReference type="PANTHER" id="PTHR11629">
    <property type="entry name" value="VACUOLAR PROTON ATPASES"/>
    <property type="match status" value="1"/>
</dbReference>
<dbReference type="Pfam" id="PF01496">
    <property type="entry name" value="V_ATPase_I"/>
    <property type="match status" value="1"/>
</dbReference>
<dbReference type="PIRSF" id="PIRSF001293">
    <property type="entry name" value="ATP6V0A1"/>
    <property type="match status" value="1"/>
</dbReference>
<name>VPP3_HUMAN</name>
<comment type="function">
    <text evidence="2 3 6">Subunit of the V0 complex of vacuolar(H+)-ATPase (V-ATPase), a multisubunit enzyme composed of a peripheral complex (V1) that hydrolyzes ATP and a membrane integral complex (V0) that translocates protons (By similarity). V-ATPase is responsible for acidifying and maintaining the pH of intracellular compartments and in some cell types, is targeted to the plasma membrane, where it is responsible for acidifying the extracellular environment (By similarity). Seems to be directly involved in T-cell activation (PubMed:10329006).</text>
</comment>
<comment type="subunit">
    <text evidence="3">V-ATPase is a heteromultimeric enzyme made up of two complexes: the ATP-hydrolytic V1 complex and the proton translocation V0 complex (By similarity). The V1 complex consists of three catalytic AB heterodimers that form a heterohexamer, three peripheral stalks each consisting of EG heterodimers, one central rotor including subunits D and F, and the regulatory subunits C and H (By similarity). The proton translocation complex V0 consists of the proton transport subunit a, a ring of proteolipid subunits c9c'', rotary subunit d, subunits e and f, and the accessory subunits ATP6AP1/Ac45 and ATP6AP2/PRR (By similarity).</text>
</comment>
<comment type="interaction">
    <interactant intactId="EBI-3914669">
        <id>Q13488</id>
    </interactant>
    <interactant intactId="EBI-1389308">
        <id>Q7Z3K3</id>
        <label>POGZ</label>
    </interactant>
    <organismsDiffer>false</organismsDiffer>
    <experiments>3</experiments>
</comment>
<comment type="interaction">
    <interactant intactId="EBI-3914669">
        <id>Q13488</id>
    </interactant>
    <interactant intactId="EBI-3939165">
        <id>O43711</id>
        <label>TLX3</label>
    </interactant>
    <organismsDiffer>false</organismsDiffer>
    <experiments>3</experiments>
</comment>
<comment type="subcellular location">
    <subcellularLocation>
        <location evidence="1">Membrane</location>
        <topology evidence="1">Multi-pass membrane protein</topology>
    </subcellularLocation>
</comment>
<comment type="alternative products">
    <event type="alternative splicing"/>
    <isoform>
        <id>Q13488-1</id>
        <name>Long</name>
        <sequence type="displayed"/>
    </isoform>
    <isoform>
        <id>Q13488-2</id>
        <name>Short</name>
        <sequence type="described" ref="VSP_000345"/>
    </isoform>
</comment>
<comment type="tissue specificity">
    <text>Isoform long is highly expressed in osteoclastomas. Isoform short is highly expressed in thymus.</text>
</comment>
<comment type="disease" evidence="7 8 9">
    <disease id="DI-00886">
        <name>Osteopetrosis, autosomal recessive 1</name>
        <acronym>OPTB1</acronym>
        <description>A rare genetic disease characterized by abnormally dense bone, due to defective resorption of immature bone. Osteopetrosis occurs in two forms: a severe autosomal recessive form occurring in utero, infancy, or childhood, and a benign autosomal dominant form occurring in adolescence or adulthood. Recessive osteopetrosis commonly manifests in early infancy with macrocephaly, feeding difficulties, evolving blindness and deafness, bone marrow failure, severe anemia, and hepatosplenomegaly. Deafness and blindness are generally thought to represent effects of pressure on nerves.</description>
        <dbReference type="MIM" id="259700"/>
    </disease>
    <text>The disease is caused by variants affecting the gene represented in this entry.</text>
</comment>
<comment type="similarity">
    <text evidence="11">Belongs to the V-ATPase 116 kDa subunit family.</text>
</comment>
<comment type="online information" name="TCIRG1base">
    <link uri="https://databases.lovd.nl/shared/genes/TCIRG1"/>
    <text>TCIRG1 mutation db</text>
</comment>
<evidence type="ECO:0000250" key="1"/>
<evidence type="ECO:0000250" key="2">
    <source>
        <dbReference type="UniProtKB" id="Q29466"/>
    </source>
</evidence>
<evidence type="ECO:0000250" key="3">
    <source>
        <dbReference type="UniProtKB" id="Q93050"/>
    </source>
</evidence>
<evidence type="ECO:0000255" key="4"/>
<evidence type="ECO:0000256" key="5">
    <source>
        <dbReference type="SAM" id="MobiDB-lite"/>
    </source>
</evidence>
<evidence type="ECO:0000269" key="6">
    <source>
    </source>
</evidence>
<evidence type="ECO:0000269" key="7">
    <source>
    </source>
</evidence>
<evidence type="ECO:0000269" key="8">
    <source>
    </source>
</evidence>
<evidence type="ECO:0000269" key="9">
    <source>
    </source>
</evidence>
<evidence type="ECO:0000303" key="10">
    <source ref="2"/>
</evidence>
<evidence type="ECO:0000305" key="11"/>
<organism>
    <name type="scientific">Homo sapiens</name>
    <name type="common">Human</name>
    <dbReference type="NCBI Taxonomy" id="9606"/>
    <lineage>
        <taxon>Eukaryota</taxon>
        <taxon>Metazoa</taxon>
        <taxon>Chordata</taxon>
        <taxon>Craniata</taxon>
        <taxon>Vertebrata</taxon>
        <taxon>Euteleostomi</taxon>
        <taxon>Mammalia</taxon>
        <taxon>Eutheria</taxon>
        <taxon>Euarchontoglires</taxon>
        <taxon>Primates</taxon>
        <taxon>Haplorrhini</taxon>
        <taxon>Catarrhini</taxon>
        <taxon>Hominidae</taxon>
        <taxon>Homo</taxon>
    </lineage>
</organism>
<proteinExistence type="evidence at protein level"/>
<sequence length="830" mass="92968">MGSMFRSEEVALVQLFLPTAAAYTCVSRLGELGLVEFRDLNASVSAFQRRFVVDVRRCEELEKTFTFLQEEVRRAGLVLPPPKGRLPAPPPRDLLRIQEETERLAQELRDVRGNQQALRAQLHQLQLHAAVLRQGHEPQLAAAHTDGASERTPLLQAPGGPHQDLRVNFVAGAVEPHKAPALERLLWRACRGFLIASFRELEQPLEHPVTGEPATWMTFLISYWGEQIGQKIRKITDCFHCHVFPFLQQEEARLGALQQLQQQSQELQEVLGETERFLSQVLGRVLQLLPPGQVQVHKMKAVYLALNQCSVSTTHKCLIAEAWCSVRDLPALQEALRDSSMEEGVSAVAHRIPCRDMPPTLIRTNRFTASFQGIVDAYGVGRYQEVNPAPYTIITFPFLFAVMFGDVGHGLLMFLFALAMVLAENRPAVKAAQNEIWQTFFRGRYLLLLMGLFSIYTGFIYNECFSRATSIFPSGWSVAAMANQSGWSDAFLAQHTMLTLDPNVTGVFLGPYPFGIDPIWSLAANHLSFLNSFKMKMSVILGVVHMAFGVVLGVFNHVHFGQRHRLLLETLPELTFLLGLFGYLVFLVIYKWLCVWAARAASAPSILIHFINMFLFSHSPSNRLLYPRQEVVQATLVVLALAMVPILLLGTPLHLLHRHRRRLRRRPADRQEENKAGLLDLPDASVNGWSSDEEKAGGLDDEEEAELVPSEVLMHQAIHTIEFCLGCVSNTASYLRLWALSLAHAQLSEVLWAMVMRIGLGLGREVGVAAVVLVPIFAAFAVMTVAILLVMEGLSAFLHALRLHWVEFQNKFYSGTGYKLSPFTFAATDD</sequence>
<reference key="1">
    <citation type="journal article" date="1996" name="Biochem. Biophys. Res. Commun.">
        <title>Molecular cloning and characterization of a putative novel human osteoclast-specific 116-kDa vacuolar proton pump subunit.</title>
        <authorList>
            <person name="Li Y.P."/>
            <person name="Chen W."/>
            <person name="Stashenko P."/>
        </authorList>
    </citation>
    <scope>NUCLEOTIDE SEQUENCE [MRNA] (ISOFORM LONG)</scope>
    <source>
        <tissue>Osteoclastoma</tissue>
    </source>
</reference>
<reference key="2">
    <citation type="submission" date="1997-09" db="EMBL/GenBank/DDBJ databases">
        <authorList>
            <person name="Utku N."/>
            <person name="Heinemann T."/>
            <person name="Bulwin C.-G."/>
            <person name="Beinke S."/>
            <person name="Beato F."/>
            <person name="Randall J."/>
            <person name="Busconi L."/>
            <person name="Delphire E."/>
            <person name="Robertson E.R."/>
            <person name="Kojima R."/>
            <person name="Volk H.D."/>
            <person name="Milford E.L."/>
            <person name="Gullans S.R."/>
        </authorList>
    </citation>
    <scope>NUCLEOTIDE SEQUENCE [MRNA] (ISOFORM SHORT)</scope>
</reference>
<reference key="3">
    <citation type="journal article" date="1999" name="Genomics">
        <title>Genomic organization of the gene coding for TIRC7, a novel membrane protein essential for T cell activation.</title>
        <authorList>
            <person name="Heinemann T."/>
            <person name="Bulwin G.C."/>
            <person name="Randall J."/>
            <person name="Schnieders B."/>
            <person name="Sandhoff K."/>
            <person name="Volk H.D."/>
            <person name="Milford E."/>
            <person name="Gullans S.R."/>
            <person name="Utku N."/>
        </authorList>
    </citation>
    <scope>NUCLEOTIDE SEQUENCE [GENOMIC DNA] (ISOFORM SHORT)</scope>
    <scope>FUNCTION</scope>
</reference>
<reference key="4">
    <citation type="submission" date="2005-07" db="EMBL/GenBank/DDBJ databases">
        <authorList>
            <person name="Mural R.J."/>
            <person name="Istrail S."/>
            <person name="Sutton G.G."/>
            <person name="Florea L."/>
            <person name="Halpern A.L."/>
            <person name="Mobarry C.M."/>
            <person name="Lippert R."/>
            <person name="Walenz B."/>
            <person name="Shatkay H."/>
            <person name="Dew I."/>
            <person name="Miller J.R."/>
            <person name="Flanigan M.J."/>
            <person name="Edwards N.J."/>
            <person name="Bolanos R."/>
            <person name="Fasulo D."/>
            <person name="Halldorsson B.V."/>
            <person name="Hannenhalli S."/>
            <person name="Turner R."/>
            <person name="Yooseph S."/>
            <person name="Lu F."/>
            <person name="Nusskern D.R."/>
            <person name="Shue B.C."/>
            <person name="Zheng X.H."/>
            <person name="Zhong F."/>
            <person name="Delcher A.L."/>
            <person name="Huson D.H."/>
            <person name="Kravitz S.A."/>
            <person name="Mouchard L."/>
            <person name="Reinert K."/>
            <person name="Remington K.A."/>
            <person name="Clark A.G."/>
            <person name="Waterman M.S."/>
            <person name="Eichler E.E."/>
            <person name="Adams M.D."/>
            <person name="Hunkapiller M.W."/>
            <person name="Myers E.W."/>
            <person name="Venter J.C."/>
        </authorList>
    </citation>
    <scope>NUCLEOTIDE SEQUENCE [LARGE SCALE GENOMIC DNA]</scope>
</reference>
<reference key="5">
    <citation type="journal article" date="2004" name="Genome Res.">
        <title>The status, quality, and expansion of the NIH full-length cDNA project: the Mammalian Gene Collection (MGC).</title>
        <authorList>
            <consortium name="The MGC Project Team"/>
        </authorList>
    </citation>
    <scope>NUCLEOTIDE SEQUENCE [LARGE SCALE MRNA] (ISOFORM LONG)</scope>
    <source>
        <tissue>Lung</tissue>
        <tissue>Pancreas</tissue>
    </source>
</reference>
<reference key="6">
    <citation type="journal article" date="2001" name="Hum. Mol. Genet.">
        <title>The mutational spectrum of human malignant autosomal recessive osteopetrosis.</title>
        <authorList>
            <person name="Sobacchi C."/>
            <person name="Frattini A."/>
            <person name="Orchard P."/>
            <person name="Porras O."/>
            <person name="Tezcan I."/>
            <person name="Andolina M."/>
            <person name="Babul-Hirji R."/>
            <person name="Baric I."/>
            <person name="Canham N."/>
            <person name="Chitayat D."/>
            <person name="Dupuis-Girod S."/>
            <person name="Ellis I."/>
            <person name="Etzioni A."/>
            <person name="Fasth A."/>
            <person name="Fisher A."/>
            <person name="Gerritsen B."/>
            <person name="Gulino V."/>
            <person name="Horwitz E."/>
            <person name="Klamroth V."/>
            <person name="Lanino E."/>
            <person name="Mirolo M."/>
            <person name="Musio A."/>
            <person name="Matthijs G."/>
            <person name="Nonomaya S."/>
            <person name="Notarangelo L.D."/>
            <person name="Ochs H.D."/>
            <person name="Superti-Furga A."/>
            <person name="Valiaho J."/>
            <person name="van Hove J.L.K."/>
            <person name="Vihinen M."/>
            <person name="Vujic D."/>
            <person name="Vezzoni P."/>
            <person name="Villa A."/>
        </authorList>
    </citation>
    <scope>VARIANTS OPTB1 ARG-405 AND LEU-444</scope>
</reference>
<reference key="7">
    <citation type="journal article" date="2003" name="Hum. Mutat.">
        <title>Novel mutations in the TCIRG1 gene encoding the a3 subunit of the vacuolar proton pump in patients affected by infantile malignant osteopetrosis.</title>
        <authorList>
            <person name="Scimeca J.-C."/>
            <person name="Quincey D."/>
            <person name="Parrinello H."/>
            <person name="Romatet D."/>
            <person name="Grosgeorge J."/>
            <person name="Gaudray P."/>
            <person name="Philip N."/>
            <person name="Fischer A."/>
            <person name="Carle G.F."/>
        </authorList>
    </citation>
    <scope>VARIANT OPTB1 ARG-405</scope>
</reference>
<reference key="8">
    <citation type="journal article" date="2004" name="Hum. Mutat.">
        <title>TCIRG1-dependent recessive osteopetrosis: mutation analysis, functional identification of the splicing defects, and in vitro rescue by U1 snRNA.</title>
        <authorList>
            <person name="Susani L."/>
            <person name="Pangrazio A."/>
            <person name="Sobacchi C."/>
            <person name="Taranta A."/>
            <person name="Mortier G."/>
            <person name="Savarirayan R."/>
            <person name="Villa A."/>
            <person name="Orchard P."/>
            <person name="Vezzoni P."/>
            <person name="Albertini A."/>
            <person name="Frattini A."/>
            <person name="Pagani F."/>
        </authorList>
    </citation>
    <scope>VARIANTS OPTB1 PRO-141; ARG-405; ASN-462 DEL; ASN-517 AND ARG-775</scope>
</reference>
<gene>
    <name type="primary">TCIRG1</name>
    <name type="synonym">ATP6N1C</name>
    <name type="synonym">ATP6V0A3</name>
</gene>
<protein>
    <recommendedName>
        <fullName>V-type proton ATPase 116 kDa subunit a 3</fullName>
        <shortName>V-ATPase 116 kDa subunit a 3</shortName>
    </recommendedName>
    <alternativeName>
        <fullName>Osteoclastic proton pump 116 kDa subunit</fullName>
        <shortName>OC-116 kDa</shortName>
        <shortName>OC116</shortName>
    </alternativeName>
    <alternativeName>
        <fullName>T-cell immune regulator 1</fullName>
    </alternativeName>
    <alternativeName>
        <fullName>T-cell immune response cDNA7 protein</fullName>
        <shortName>TIRC7</shortName>
    </alternativeName>
    <alternativeName>
        <fullName>Vacuolar proton translocating ATPase 116 kDa subunit a isoform 3</fullName>
    </alternativeName>
</protein>
<accession>Q13488</accession>
<accession>O75877</accession>
<accession>Q8WVC5</accession>
<keyword id="KW-0025">Alternative splicing</keyword>
<keyword id="KW-0225">Disease variant</keyword>
<keyword id="KW-0375">Hydrogen ion transport</keyword>
<keyword id="KW-0406">Ion transport</keyword>
<keyword id="KW-0472">Membrane</keyword>
<keyword id="KW-0987">Osteopetrosis</keyword>
<keyword id="KW-1267">Proteomics identification</keyword>
<keyword id="KW-1185">Reference proteome</keyword>
<keyword id="KW-0812">Transmembrane</keyword>
<keyword id="KW-1133">Transmembrane helix</keyword>
<keyword id="KW-0813">Transport</keyword>
<feature type="chain" id="PRO_0000119218" description="V-type proton ATPase 116 kDa subunit a 3">
    <location>
        <begin position="1"/>
        <end position="830"/>
    </location>
</feature>
<feature type="topological domain" description="Cytoplasmic" evidence="4">
    <location>
        <begin position="1"/>
        <end position="385"/>
    </location>
</feature>
<feature type="transmembrane region" description="Helical" evidence="4">
    <location>
        <begin position="386"/>
        <end position="404"/>
    </location>
</feature>
<feature type="topological domain" description="Vacuolar" evidence="4">
    <location>
        <begin position="405"/>
        <end position="406"/>
    </location>
</feature>
<feature type="transmembrane region" description="Helical" evidence="4">
    <location>
        <begin position="407"/>
        <end position="423"/>
    </location>
</feature>
<feature type="topological domain" description="Cytoplasmic" evidence="4">
    <location>
        <begin position="424"/>
        <end position="438"/>
    </location>
</feature>
<feature type="transmembrane region" description="Helical" evidence="4">
    <location>
        <begin position="439"/>
        <end position="468"/>
    </location>
</feature>
<feature type="topological domain" description="Vacuolar" evidence="4">
    <location>
        <begin position="469"/>
        <end position="532"/>
    </location>
</feature>
<feature type="transmembrane region" description="Helical" evidence="4">
    <location>
        <begin position="533"/>
        <end position="552"/>
    </location>
</feature>
<feature type="topological domain" description="Cytoplasmic" evidence="4">
    <location>
        <begin position="553"/>
        <end position="570"/>
    </location>
</feature>
<feature type="transmembrane region" description="Helical" evidence="4">
    <location>
        <begin position="571"/>
        <end position="591"/>
    </location>
</feature>
<feature type="topological domain" description="Vacuolar" evidence="4">
    <location>
        <begin position="592"/>
        <end position="635"/>
    </location>
</feature>
<feature type="transmembrane region" description="Helical" evidence="4">
    <location>
        <begin position="636"/>
        <end position="655"/>
    </location>
</feature>
<feature type="topological domain" description="Cytoplasmic" evidence="4">
    <location>
        <begin position="656"/>
        <end position="720"/>
    </location>
</feature>
<feature type="transmembrane region" description="Helical" evidence="4">
    <location>
        <begin position="721"/>
        <end position="745"/>
    </location>
</feature>
<feature type="topological domain" description="Vacuolar" evidence="4">
    <location>
        <begin position="746"/>
        <end position="766"/>
    </location>
</feature>
<feature type="transmembrane region" description="Helical" evidence="4">
    <location>
        <begin position="767"/>
        <end position="807"/>
    </location>
</feature>
<feature type="topological domain" description="Cytoplasmic" evidence="4">
    <location>
        <begin position="808"/>
        <end position="830"/>
    </location>
</feature>
<feature type="region of interest" description="Disordered" evidence="5">
    <location>
        <begin position="139"/>
        <end position="158"/>
    </location>
</feature>
<feature type="region of interest" description="Disordered" evidence="5">
    <location>
        <begin position="681"/>
        <end position="701"/>
    </location>
</feature>
<feature type="splice variant" id="VSP_000345" description="In isoform Short." evidence="10">
    <location>
        <begin position="1"/>
        <end position="216"/>
    </location>
</feature>
<feature type="sequence variant" id="VAR_054340" description="In dbSNP:rs36027301.">
    <original>R</original>
    <variation>W</variation>
    <location>
        <position position="56"/>
    </location>
</feature>
<feature type="sequence variant" id="VAR_020988" description="In OPTB1." evidence="9">
    <original>A</original>
    <variation>P</variation>
    <location>
        <position position="141"/>
    </location>
</feature>
<feature type="sequence variant" id="VAR_054341" description="In dbSNP:rs34227834.">
    <original>P</original>
    <variation>L</variation>
    <location>
        <position position="161"/>
    </location>
</feature>
<feature type="sequence variant" id="VAR_019569" description="In OPTB1; dbSNP:rs137853150." evidence="7 8 9">
    <original>G</original>
    <variation>R</variation>
    <location>
        <position position="405"/>
    </location>
</feature>
<feature type="sequence variant" id="VAR_019570" description="In OPTB1; dbSNP:rs137853151." evidence="7">
    <original>R</original>
    <variation>L</variation>
    <location>
        <position position="444"/>
    </location>
</feature>
<feature type="sequence variant" id="VAR_020989" description="In OPTB1; dbSNP:rs771271907." evidence="9">
    <location>
        <position position="462"/>
    </location>
</feature>
<feature type="sequence variant" id="VAR_020990" description="In OPTB1; dbSNP:rs369264588." evidence="9">
    <original>D</original>
    <variation>N</variation>
    <location>
        <position position="517"/>
    </location>
</feature>
<feature type="sequence variant" id="VAR_020991" description="In OPTB1." evidence="9">
    <original>P</original>
    <variation>R</variation>
    <location>
        <position position="775"/>
    </location>
</feature>
<feature type="sequence conflict" description="In Ref. 1; AAA97878." evidence="11" ref="1">
    <original>A</original>
    <variation>R</variation>
    <location>
        <position position="377"/>
    </location>
</feature>
<feature type="sequence conflict" description="In Ref. 1; AAA97878." evidence="11" ref="1">
    <location>
        <position position="603"/>
    </location>
</feature>